<comment type="function">
    <text evidence="2">Plays a role in the regulation of the mitochondrial ribosome assembly and of translational activity (By similarity). Displays mitochondrial GTPase activity (By similarity).</text>
</comment>
<comment type="subunit">
    <text evidence="2">Associates with the mitochondrial ribosome large subunit; the association occurs in a GTP-dependent manner (By similarity).</text>
</comment>
<comment type="subcellular location">
    <subcellularLocation>
        <location evidence="2">Mitochondrion inner membrane</location>
        <topology evidence="2">Peripheral membrane protein</topology>
        <orientation evidence="2">Matrix side</orientation>
    </subcellularLocation>
</comment>
<comment type="similarity">
    <text evidence="4">Belongs to the TRAFAC class YlqF/YawG GTPase family. MTG1 subfamily.</text>
</comment>
<keyword id="KW-0342">GTP-binding</keyword>
<keyword id="KW-0472">Membrane</keyword>
<keyword id="KW-0496">Mitochondrion</keyword>
<keyword id="KW-0999">Mitochondrion inner membrane</keyword>
<keyword id="KW-0547">Nucleotide-binding</keyword>
<keyword id="KW-1185">Reference proteome</keyword>
<keyword id="KW-0809">Transit peptide</keyword>
<keyword id="KW-0810">Translation regulation</keyword>
<reference key="1">
    <citation type="journal article" date="2006" name="Mamm. Genome">
        <title>Cloning of the bovine prion-like Shadoo (SPRN) gene by comparative analysis of the predicted genomic locus.</title>
        <authorList>
            <person name="Uboldi C."/>
            <person name="Paulis M."/>
            <person name="Guidi E."/>
            <person name="Bertoni A."/>
            <person name="Di Meo G.P."/>
            <person name="Perucatti A."/>
            <person name="Iannuzzi L."/>
            <person name="Raimondi E."/>
            <person name="Brunner R.M."/>
            <person name="Eggen A."/>
            <person name="Ferretti L."/>
        </authorList>
    </citation>
    <scope>NUCLEOTIDE SEQUENCE [GENOMIC DNA / MRNA]</scope>
</reference>
<reference key="2">
    <citation type="submission" date="2005-08" db="EMBL/GenBank/DDBJ databases">
        <authorList>
            <consortium name="NIH - Mammalian Gene Collection (MGC) project"/>
        </authorList>
    </citation>
    <scope>NUCLEOTIDE SEQUENCE [LARGE SCALE MRNA]</scope>
    <source>
        <strain>Hereford</strain>
        <tissue>Fetal liver</tissue>
    </source>
</reference>
<accession>Q4PS77</accession>
<accession>Q3SZ06</accession>
<dbReference type="EMBL" id="DQ058604">
    <property type="protein sequence ID" value="AAY83879.1"/>
    <property type="molecule type" value="Genomic_DNA"/>
</dbReference>
<dbReference type="EMBL" id="DQ058609">
    <property type="protein sequence ID" value="AAY83883.1"/>
    <property type="molecule type" value="mRNA"/>
</dbReference>
<dbReference type="EMBL" id="BC103282">
    <property type="protein sequence ID" value="AAI03283.1"/>
    <property type="molecule type" value="mRNA"/>
</dbReference>
<dbReference type="RefSeq" id="NP_001020498.2">
    <property type="nucleotide sequence ID" value="NM_001025327.2"/>
</dbReference>
<dbReference type="SMR" id="Q4PS77"/>
<dbReference type="FunCoup" id="Q4PS77">
    <property type="interactions" value="1958"/>
</dbReference>
<dbReference type="STRING" id="9913.ENSBTAP00000027058"/>
<dbReference type="PaxDb" id="9913-ENSBTAP00000027058"/>
<dbReference type="GeneID" id="509768"/>
<dbReference type="KEGG" id="bta:509768"/>
<dbReference type="CTD" id="92170"/>
<dbReference type="eggNOG" id="KOG2485">
    <property type="taxonomic scope" value="Eukaryota"/>
</dbReference>
<dbReference type="HOGENOM" id="CLU_011106_0_2_1"/>
<dbReference type="InParanoid" id="Q4PS77"/>
<dbReference type="OrthoDB" id="269151at2759"/>
<dbReference type="TreeFam" id="TF314530"/>
<dbReference type="Proteomes" id="UP000009136">
    <property type="component" value="Unplaced"/>
</dbReference>
<dbReference type="GO" id="GO:0005743">
    <property type="term" value="C:mitochondrial inner membrane"/>
    <property type="evidence" value="ECO:0000250"/>
    <property type="project" value="UniProtKB"/>
</dbReference>
<dbReference type="GO" id="GO:0005759">
    <property type="term" value="C:mitochondrial matrix"/>
    <property type="evidence" value="ECO:0000250"/>
    <property type="project" value="UniProtKB"/>
</dbReference>
<dbReference type="GO" id="GO:0005761">
    <property type="term" value="C:mitochondrial ribosome"/>
    <property type="evidence" value="ECO:0000250"/>
    <property type="project" value="UniProtKB"/>
</dbReference>
<dbReference type="GO" id="GO:0005739">
    <property type="term" value="C:mitochondrion"/>
    <property type="evidence" value="ECO:0000318"/>
    <property type="project" value="GO_Central"/>
</dbReference>
<dbReference type="GO" id="GO:0005525">
    <property type="term" value="F:GTP binding"/>
    <property type="evidence" value="ECO:0007669"/>
    <property type="project" value="UniProtKB-KW"/>
</dbReference>
<dbReference type="GO" id="GO:0003924">
    <property type="term" value="F:GTPase activity"/>
    <property type="evidence" value="ECO:0000250"/>
    <property type="project" value="UniProtKB"/>
</dbReference>
<dbReference type="GO" id="GO:0032543">
    <property type="term" value="P:mitochondrial translation"/>
    <property type="evidence" value="ECO:0000318"/>
    <property type="project" value="GO_Central"/>
</dbReference>
<dbReference type="GO" id="GO:0070129">
    <property type="term" value="P:regulation of mitochondrial translation"/>
    <property type="evidence" value="ECO:0000250"/>
    <property type="project" value="UniProtKB"/>
</dbReference>
<dbReference type="GO" id="GO:0044065">
    <property type="term" value="P:regulation of respiratory system process"/>
    <property type="evidence" value="ECO:0000250"/>
    <property type="project" value="UniProtKB"/>
</dbReference>
<dbReference type="CDD" id="cd01856">
    <property type="entry name" value="YlqF"/>
    <property type="match status" value="1"/>
</dbReference>
<dbReference type="FunFam" id="1.10.1580.10:FF:000004">
    <property type="entry name" value="Mitochondrial GTPase 1"/>
    <property type="match status" value="1"/>
</dbReference>
<dbReference type="FunFam" id="3.40.50.300:FF:000876">
    <property type="entry name" value="Mitochondrial GTPase 1"/>
    <property type="match status" value="1"/>
</dbReference>
<dbReference type="Gene3D" id="1.10.1580.10">
    <property type="match status" value="1"/>
</dbReference>
<dbReference type="Gene3D" id="3.40.50.300">
    <property type="entry name" value="P-loop containing nucleotide triphosphate hydrolases"/>
    <property type="match status" value="1"/>
</dbReference>
<dbReference type="InterPro" id="IPR030378">
    <property type="entry name" value="G_CP_dom"/>
</dbReference>
<dbReference type="InterPro" id="IPR006073">
    <property type="entry name" value="GTP-bd"/>
</dbReference>
<dbReference type="InterPro" id="IPR023179">
    <property type="entry name" value="GTP-bd_ortho_bundle_sf"/>
</dbReference>
<dbReference type="InterPro" id="IPR016478">
    <property type="entry name" value="GTPase_MTG1"/>
</dbReference>
<dbReference type="InterPro" id="IPR027417">
    <property type="entry name" value="P-loop_NTPase"/>
</dbReference>
<dbReference type="PANTHER" id="PTHR45782">
    <property type="entry name" value="MITOCHONDRIAL RIBOSOME-ASSOCIATED GTPASE 1"/>
    <property type="match status" value="1"/>
</dbReference>
<dbReference type="PANTHER" id="PTHR45782:SF4">
    <property type="entry name" value="MITOCHONDRIAL RIBOSOME-ASSOCIATED GTPASE 1"/>
    <property type="match status" value="1"/>
</dbReference>
<dbReference type="Pfam" id="PF01926">
    <property type="entry name" value="MMR_HSR1"/>
    <property type="match status" value="1"/>
</dbReference>
<dbReference type="PIRSF" id="PIRSF006230">
    <property type="entry name" value="MG442"/>
    <property type="match status" value="1"/>
</dbReference>
<dbReference type="SUPFAM" id="SSF52540">
    <property type="entry name" value="P-loop containing nucleoside triphosphate hydrolases"/>
    <property type="match status" value="1"/>
</dbReference>
<dbReference type="PROSITE" id="PS51721">
    <property type="entry name" value="G_CP"/>
    <property type="match status" value="1"/>
</dbReference>
<feature type="transit peptide" description="Mitochondrion" evidence="3">
    <location>
        <begin position="1"/>
        <end status="unknown"/>
    </location>
</feature>
<feature type="chain" id="PRO_0000280261" description="Mitochondrial ribosome-associated GTPase 1">
    <location>
        <begin status="unknown"/>
        <end position="332"/>
    </location>
</feature>
<feature type="domain" description="CP-type G" evidence="4">
    <location>
        <begin position="36"/>
        <end position="209"/>
    </location>
</feature>
<feature type="binding site" evidence="1">
    <location>
        <begin position="83"/>
        <end position="86"/>
    </location>
    <ligand>
        <name>GTP</name>
        <dbReference type="ChEBI" id="CHEBI:37565"/>
    </ligand>
</feature>
<feature type="binding site" evidence="1">
    <location>
        <begin position="153"/>
        <end position="158"/>
    </location>
    <ligand>
        <name>GTP</name>
        <dbReference type="ChEBI" id="CHEBI:37565"/>
    </ligand>
</feature>
<feature type="binding site" evidence="1">
    <location>
        <position position="205"/>
    </location>
    <ligand>
        <name>GTP</name>
        <dbReference type="ChEBI" id="CHEBI:37565"/>
    </ligand>
</feature>
<feature type="sequence conflict" description="In Ref. 1; AAY83879/AAY83883." evidence="5" ref="1">
    <original>Q</original>
    <variation>R</variation>
    <location>
        <position position="59"/>
    </location>
</feature>
<evidence type="ECO:0000250" key="1"/>
<evidence type="ECO:0000250" key="2">
    <source>
        <dbReference type="UniProtKB" id="Q9BT17"/>
    </source>
</evidence>
<evidence type="ECO:0000255" key="3"/>
<evidence type="ECO:0000255" key="4">
    <source>
        <dbReference type="PROSITE-ProRule" id="PRU01058"/>
    </source>
</evidence>
<evidence type="ECO:0000305" key="5"/>
<name>MTG1_BOVIN</name>
<sequence>MRLSPRSLCAAVRAAWRESFPLEGRDVARWFPGHMAKGLKKMQSSLRLVDCIIEVHDAQIPLSGRNPLFQETLGLKPHLLVLNKMDLADLKEQQKIIQHLEREGIKHVVFTNCVKDENVKQVIPTVTELVGSSYRYHRGEHVEYCIMVIGVPNVGKSSLINSLRRQHLRKGKATRVGGEPGITRAVMSRIQVCERPLMFLLDTPGVLAPRIPSVETGLKLALCGTVLDHLVGEETLADFLLYTLNRHQLSGYVQHYGLGEACDDIASVLKRVAVKLRKTQKVKVLTGTGNVNVIQPDYPAAARDFLRAFRSGLLGPVMLDRDLLQGRSAEES</sequence>
<gene>
    <name type="primary">MTG1</name>
</gene>
<organism>
    <name type="scientific">Bos taurus</name>
    <name type="common">Bovine</name>
    <dbReference type="NCBI Taxonomy" id="9913"/>
    <lineage>
        <taxon>Eukaryota</taxon>
        <taxon>Metazoa</taxon>
        <taxon>Chordata</taxon>
        <taxon>Craniata</taxon>
        <taxon>Vertebrata</taxon>
        <taxon>Euteleostomi</taxon>
        <taxon>Mammalia</taxon>
        <taxon>Eutheria</taxon>
        <taxon>Laurasiatheria</taxon>
        <taxon>Artiodactyla</taxon>
        <taxon>Ruminantia</taxon>
        <taxon>Pecora</taxon>
        <taxon>Bovidae</taxon>
        <taxon>Bovinae</taxon>
        <taxon>Bos</taxon>
    </lineage>
</organism>
<protein>
    <recommendedName>
        <fullName>Mitochondrial ribosome-associated GTPase 1</fullName>
    </recommendedName>
    <alternativeName>
        <fullName>Mitochondrial GTPase 1</fullName>
    </alternativeName>
</protein>
<proteinExistence type="evidence at transcript level"/>